<comment type="interaction">
    <interactant intactId="EBI-8796741">
        <id>Q9BY89</id>
    </interactant>
    <interactant intactId="EBI-389668">
        <id>Q00987</id>
        <label>MDM2</label>
    </interactant>
    <organismsDiffer>false</organismsDiffer>
    <experiments>2</experiments>
</comment>
<comment type="alternative products">
    <event type="alternative splicing"/>
    <isoform>
        <id>Q9BY89-1</id>
        <name>1</name>
        <sequence type="displayed"/>
    </isoform>
    <isoform>
        <id>Q9BY89-2</id>
        <name>2</name>
        <sequence type="described" ref="VSP_025337 VSP_025338"/>
    </isoform>
</comment>
<comment type="miscellaneous">
    <text>Antibodies against KIAA1671 are present in sera from patients with breast cancer who developed several autoantibodies.</text>
</comment>
<comment type="sequence caution" evidence="3">
    <conflict type="erroneous initiation">
        <sequence resource="EMBL-CDS" id="BAB33341"/>
    </conflict>
</comment>
<accession>Q9BY89</accession>
<accession>B0QYF2</accession>
<accession>B7ZW08</accession>
<accession>Q5THZ5</accession>
<organism>
    <name type="scientific">Homo sapiens</name>
    <name type="common">Human</name>
    <dbReference type="NCBI Taxonomy" id="9606"/>
    <lineage>
        <taxon>Eukaryota</taxon>
        <taxon>Metazoa</taxon>
        <taxon>Chordata</taxon>
        <taxon>Craniata</taxon>
        <taxon>Vertebrata</taxon>
        <taxon>Euteleostomi</taxon>
        <taxon>Mammalia</taxon>
        <taxon>Eutheria</taxon>
        <taxon>Euarchontoglires</taxon>
        <taxon>Primates</taxon>
        <taxon>Haplorrhini</taxon>
        <taxon>Catarrhini</taxon>
        <taxon>Hominidae</taxon>
        <taxon>Homo</taxon>
    </lineage>
</organism>
<name>K1671_HUMAN</name>
<proteinExistence type="evidence at protein level"/>
<protein>
    <recommendedName>
        <fullName>Uncharacterized protein KIAA1671</fullName>
    </recommendedName>
</protein>
<sequence>MATRVEVGSITPLTAVPGLGEMGKEETLTRTYFLQAGEASGAPPARILEAKSPLRSPARLLPLPRLAPKPFSKEQDVKSPVPSLRPSSTGPSPSGGLSEEPAAKDLDNRMPGLVGQEVGSGEGPRTSSPLFNKAVFLRPSSSTMILFETTKSGPALGKAVSEGAEEAKLGVSGSRPEVAAKPALPTQKPAGTLPRSAPLSQDTKPPVPQEEAGQDHPPSKASSVEDTARPLVEPRPRLKRRPVSAIFTESIQPQKPGPGAAATVGKVPPTPPEKTWVRKPRPLSMDLTARFENKEALLRKVADEGSGPTAGDMAGLERPRAASKLDRDCLVKAEAPLHDPDLDFLEVAKKIRERKEKMLSKPEMGSPRALVGGSSGVTPSNDQSPWEEKAKLDPEPEKAAESPSPRLGRGLELAEVKSRVADGEAAAGGEWASRRSVRKCISLFREDSTLALAVGSESPLATPASPSAAPEPEKGVVSVQERIRGWTAESSEAKPEVRRRTFQARPLSADLTKLFSSSASSNEVKYEKSAELSGEFPKEPREKQKEGHSLDGACIPRSPWKPGTLRDKSRQTEQKVSSNQDPDSCRGGSSVEAPCPSDVTPEDDRSFQTVWATVFEHHVERHTVADQSGRCLSTTPPGDMAHARVSEPRPRPEMGSWLGRDPPDMTKLKKENSRGFDNPETEKLGPTTLLNGELRPYHTPLRDKYPLSENHNNNTFLKHLENPPTSQRIEPRYDIVHAVGERVHSEAISPAPEEKAVTLRSLRSWLSLKDRQLSQEVTPADLECGLEGQAGSVQRASLIWEARGMPEASGPKFGGNCPFPKWTGGAVVSSHKATVAVSEEHCAPGATSVRAIKAAIWESQHEGPEGARSKPGVGARGPPQGCPLDPLSRATNGPSDSQARTHPDAFAVQKGPFIVAAREGDPGPAQVPQPAVRMRKAGAMDQRMDRWRRRTLPPNVKFDTFSSLVPEDSPHVGHRRTDYVSPTASALRKPQLSHYRVETQEVNPGASRDQTSPAVKQGSPVEPKATFFAVTYQIPNTQKAKGVVLSGAESLLEHSRKITPPSSPHSLTSTLVSLGHEEALEMAGSKNWMKGREHENASILKTLKPTDRPSSLGAWSLDPFNGRIIDVDALWSHRGSEDGPRPQSNWKESANKMSPSGGAPQTTPTLRSRPKDLPVRRKTDVISDTFPGKIRDGYRSSVLDIDALMAEYQELSLKVPGEAQERRSPTVEPSTLPRERPVQLGGVEQRRRSLKEMPDTGGLWKPASSAEINHSFTPGLGKQLAETLETAMGTKSSPPFWALPPSAPSERYPGGSPIPADPRKKTGFAEDDRKAFASKHHVAKCQNYLAESKPSGREDPGSGVRVSPKSPPTDQKKGTPRKSTGRGEEDSVAQWGDHPRDCGRVPLDIKRAYSEKGPPANIREGLSIMHEARERRREQPKGRPSLTGENLEAKMGPCWWESGTGDSHKVLPRDLEKEDAPQEKERPLQQVSPVASVPWRSHSFCKDRRSGPFVDQLKQCFSRQPTEPKDTDTLVHEAGSQYGTWTEQCQSGESLATESPDSSATSTRKQPPSSRLSSLSSQTEPTSAGDQYDCSRDQRSTSVDHSSTDLESTDGMEGPPPPDACPEKRVDDFSFIDQTSVLDSSALKTRVQLSKRSRRRAPISHSLRRSRFSESESRSPLEDETDNTWMFKDSTEEKSPRKEESDEEETASKAERTPVSHPQRMPAFPGMDPAVLKAQLHKRPEVDSPGETPSWAPQPKSPKSPFQPGVLGSRVLPSSMDKDERSDEPSPQWLKELKSKKRQSLYENQV</sequence>
<feature type="chain" id="PRO_0000287145" description="Uncharacterized protein KIAA1671">
    <location>
        <begin position="1"/>
        <end position="1806"/>
    </location>
</feature>
<feature type="region of interest" description="Disordered" evidence="1">
    <location>
        <begin position="38"/>
        <end position="131"/>
    </location>
</feature>
<feature type="region of interest" description="Disordered" evidence="1">
    <location>
        <begin position="158"/>
        <end position="282"/>
    </location>
</feature>
<feature type="region of interest" description="Disordered" evidence="1">
    <location>
        <begin position="299"/>
        <end position="320"/>
    </location>
</feature>
<feature type="region of interest" description="Disordered" evidence="1">
    <location>
        <begin position="355"/>
        <end position="431"/>
    </location>
</feature>
<feature type="region of interest" description="Disordered" evidence="1">
    <location>
        <begin position="456"/>
        <end position="604"/>
    </location>
</feature>
<feature type="region of interest" description="Disordered" evidence="1">
    <location>
        <begin position="627"/>
        <end position="696"/>
    </location>
</feature>
<feature type="region of interest" description="Disordered" evidence="1">
    <location>
        <begin position="860"/>
        <end position="901"/>
    </location>
</feature>
<feature type="region of interest" description="Disordered" evidence="1">
    <location>
        <begin position="969"/>
        <end position="989"/>
    </location>
</feature>
<feature type="region of interest" description="Disordered" evidence="1">
    <location>
        <begin position="1000"/>
        <end position="1019"/>
    </location>
</feature>
<feature type="region of interest" description="Disordered" evidence="1">
    <location>
        <begin position="1134"/>
        <end position="1178"/>
    </location>
</feature>
<feature type="region of interest" description="Disordered" evidence="1">
    <location>
        <begin position="1216"/>
        <end position="1265"/>
    </location>
</feature>
<feature type="region of interest" description="Disordered" evidence="1">
    <location>
        <begin position="1291"/>
        <end position="1493"/>
    </location>
</feature>
<feature type="region of interest" description="Disordered" evidence="1">
    <location>
        <begin position="1512"/>
        <end position="1627"/>
    </location>
</feature>
<feature type="region of interest" description="Disordered" evidence="1">
    <location>
        <begin position="1642"/>
        <end position="1806"/>
    </location>
</feature>
<feature type="compositionally biased region" description="Low complexity" evidence="1">
    <location>
        <begin position="51"/>
        <end position="70"/>
    </location>
</feature>
<feature type="compositionally biased region" description="Low complexity" evidence="1">
    <location>
        <begin position="82"/>
        <end position="100"/>
    </location>
</feature>
<feature type="compositionally biased region" description="Basic and acidic residues" evidence="1">
    <location>
        <begin position="226"/>
        <end position="236"/>
    </location>
</feature>
<feature type="compositionally biased region" description="Basic and acidic residues" evidence="1">
    <location>
        <begin position="386"/>
        <end position="400"/>
    </location>
</feature>
<feature type="compositionally biased region" description="Basic and acidic residues" evidence="1">
    <location>
        <begin position="412"/>
        <end position="422"/>
    </location>
</feature>
<feature type="compositionally biased region" description="Low complexity" evidence="1">
    <location>
        <begin position="456"/>
        <end position="470"/>
    </location>
</feature>
<feature type="compositionally biased region" description="Polar residues" evidence="1">
    <location>
        <begin position="514"/>
        <end position="523"/>
    </location>
</feature>
<feature type="compositionally biased region" description="Basic and acidic residues" evidence="1">
    <location>
        <begin position="524"/>
        <end position="549"/>
    </location>
</feature>
<feature type="compositionally biased region" description="Basic and acidic residues" evidence="1">
    <location>
        <begin position="564"/>
        <end position="573"/>
    </location>
</feature>
<feature type="compositionally biased region" description="Basic and acidic residues" evidence="1">
    <location>
        <begin position="641"/>
        <end position="652"/>
    </location>
</feature>
<feature type="compositionally biased region" description="Basic and acidic residues" evidence="1">
    <location>
        <begin position="661"/>
        <end position="674"/>
    </location>
</feature>
<feature type="compositionally biased region" description="Polar residues" evidence="1">
    <location>
        <begin position="889"/>
        <end position="900"/>
    </location>
</feature>
<feature type="compositionally biased region" description="Basic and acidic residues" evidence="1">
    <location>
        <begin position="969"/>
        <end position="978"/>
    </location>
</feature>
<feature type="compositionally biased region" description="Polar residues" evidence="1">
    <location>
        <begin position="1142"/>
        <end position="1166"/>
    </location>
</feature>
<feature type="compositionally biased region" description="Basic and acidic residues" evidence="1">
    <location>
        <begin position="1169"/>
        <end position="1178"/>
    </location>
</feature>
<feature type="compositionally biased region" description="Basic and acidic residues" evidence="1">
    <location>
        <begin position="1244"/>
        <end position="1254"/>
    </location>
</feature>
<feature type="compositionally biased region" description="Basic and acidic residues" evidence="1">
    <location>
        <begin position="1317"/>
        <end position="1331"/>
    </location>
</feature>
<feature type="compositionally biased region" description="Basic and acidic residues" evidence="1">
    <location>
        <begin position="1393"/>
        <end position="1410"/>
    </location>
</feature>
<feature type="compositionally biased region" description="Basic and acidic residues" evidence="1">
    <location>
        <begin position="1426"/>
        <end position="1437"/>
    </location>
</feature>
<feature type="compositionally biased region" description="Basic and acidic residues" evidence="1">
    <location>
        <begin position="1462"/>
        <end position="1483"/>
    </location>
</feature>
<feature type="compositionally biased region" description="Basic and acidic residues" evidence="1">
    <location>
        <begin position="1522"/>
        <end position="1531"/>
    </location>
</feature>
<feature type="compositionally biased region" description="Polar residues" evidence="1">
    <location>
        <begin position="1537"/>
        <end position="1568"/>
    </location>
</feature>
<feature type="compositionally biased region" description="Basic residues" evidence="1">
    <location>
        <begin position="1649"/>
        <end position="1666"/>
    </location>
</feature>
<feature type="compositionally biased region" description="Basic and acidic residues" evidence="1">
    <location>
        <begin position="1667"/>
        <end position="1677"/>
    </location>
</feature>
<feature type="compositionally biased region" description="Basic and acidic residues" evidence="1">
    <location>
        <begin position="1689"/>
        <end position="1714"/>
    </location>
</feature>
<feature type="compositionally biased region" description="Low complexity" evidence="1">
    <location>
        <begin position="1753"/>
        <end position="1764"/>
    </location>
</feature>
<feature type="modified residue" description="Phosphoserine" evidence="7">
    <location>
        <position position="52"/>
    </location>
</feature>
<feature type="modified residue" description="Phosphoserine" evidence="7">
    <location>
        <position position="56"/>
    </location>
</feature>
<feature type="modified residue" description="Phosphoserine" evidence="5">
    <location>
        <position position="79"/>
    </location>
</feature>
<feature type="modified residue" description="Phosphoserine" evidence="5">
    <location>
        <position position="87"/>
    </location>
</feature>
<feature type="modified residue" description="Phosphoserine" evidence="5">
    <location>
        <position position="88"/>
    </location>
</feature>
<feature type="modified residue" description="Phosphoserine" evidence="6">
    <location>
        <position position="92"/>
    </location>
</feature>
<feature type="modified residue" description="Phosphoserine" evidence="5 7">
    <location>
        <position position="128"/>
    </location>
</feature>
<feature type="modified residue" description="Phosphoserine" evidence="8">
    <location>
        <position position="244"/>
    </location>
</feature>
<feature type="modified residue" description="Phosphoserine" evidence="7">
    <location>
        <position position="284"/>
    </location>
</feature>
<feature type="modified residue" description="Phosphoserine" evidence="7">
    <location>
        <position position="366"/>
    </location>
</feature>
<feature type="modified residue" description="Phosphothreonine" evidence="6">
    <location>
        <position position="378"/>
    </location>
</feature>
<feature type="modified residue" description="Phosphoserine" evidence="5 6">
    <location>
        <position position="384"/>
    </location>
</feature>
<feature type="modified residue" description="Phosphoserine" evidence="7">
    <location>
        <position position="404"/>
    </location>
</feature>
<feature type="modified residue" description="Phosphoserine" evidence="6">
    <location>
        <position position="458"/>
    </location>
</feature>
<feature type="modified residue" description="Phosphoserine" evidence="5 6 7">
    <location>
        <position position="508"/>
    </location>
</feature>
<feature type="modified residue" description="Phosphothreonine" evidence="8">
    <location>
        <position position="600"/>
    </location>
</feature>
<feature type="modified residue" description="Phosphoserine" evidence="5 6 7">
    <location>
        <position position="749"/>
    </location>
</feature>
<feature type="modified residue" description="Phosphoserine" evidence="6">
    <location>
        <position position="969"/>
    </location>
</feature>
<feature type="modified residue" description="Phosphoserine" evidence="7">
    <location>
        <position position="981"/>
    </location>
</feature>
<feature type="modified residue" description="Phosphothreonine" evidence="5 6">
    <location>
        <position position="1059"/>
    </location>
</feature>
<feature type="modified residue" description="Phosphoserine" evidence="5">
    <location>
        <position position="1063"/>
    </location>
</feature>
<feature type="modified residue" description="Phosphoserine" evidence="6">
    <location>
        <position position="1154"/>
    </location>
</feature>
<feature type="modified residue" description="Phosphothreonine" evidence="6">
    <location>
        <position position="1163"/>
    </location>
</feature>
<feature type="modified residue" description="Phosphothreonine" evidence="7">
    <location>
        <position position="1179"/>
    </location>
</feature>
<feature type="modified residue" description="Phosphothreonine" evidence="7">
    <location>
        <position position="1185"/>
    </location>
</feature>
<feature type="modified residue" description="Phosphoserine" evidence="5 7">
    <location>
        <position position="1224"/>
    </location>
</feature>
<feature type="modified residue" description="Phosphothreonine" evidence="7">
    <location>
        <position position="1226"/>
    </location>
</feature>
<feature type="modified residue" description="Phosphoserine" evidence="5">
    <location>
        <position position="1366"/>
    </location>
</feature>
<feature type="modified residue" description="Phosphoserine" evidence="5 6 7">
    <location>
        <position position="1441"/>
    </location>
</feature>
<feature type="modified residue" description="Phosphoserine" evidence="5 6 7">
    <location>
        <position position="1488"/>
    </location>
</feature>
<feature type="modified residue" description="Phosphoserine" evidence="7">
    <location>
        <position position="1506"/>
    </location>
</feature>
<feature type="modified residue" description="Phosphoserine" evidence="8">
    <location>
        <position position="1555"/>
    </location>
</feature>
<feature type="modified residue" description="Phosphoserine" evidence="8">
    <location>
        <position position="1662"/>
    </location>
</feature>
<feature type="modified residue" description="Phosphoserine" evidence="4 6">
    <location>
        <position position="1701"/>
    </location>
</feature>
<feature type="modified residue" description="Phosphoserine" evidence="5 7">
    <location>
        <position position="1757"/>
    </location>
</feature>
<feature type="modified residue" description="Phosphoserine" evidence="5 7">
    <location>
        <position position="1760"/>
    </location>
</feature>
<feature type="modified residue" description="Phosphoserine" evidence="5 6">
    <location>
        <position position="1786"/>
    </location>
</feature>
<feature type="splice variant" id="VSP_025337" description="In isoform 2." evidence="2">
    <location>
        <begin position="1"/>
        <end position="1493"/>
    </location>
</feature>
<feature type="splice variant" id="VSP_025338" description="In isoform 2." evidence="2">
    <original>PWRSHSFCKDRRSGPFV</original>
    <variation>MEYYYCPSLLKLLRYLW</variation>
    <location>
        <begin position="1494"/>
        <end position="1510"/>
    </location>
</feature>
<feature type="sequence conflict" description="In Ref. 4; AAI71801." evidence="3" ref="4">
    <original>R</original>
    <variation>L</variation>
    <location>
        <position position="644"/>
    </location>
</feature>
<reference key="1">
    <citation type="journal article" date="2001" name="DNA Res.">
        <title>Identification of novel transcribed sequences on human chromosome 22 by expressed sequence tag mapping.</title>
        <authorList>
            <person name="Hirosawa M."/>
            <person name="Nagase T."/>
            <person name="Murahashi Y."/>
            <person name="Kikuno R."/>
            <person name="Ohara O."/>
        </authorList>
    </citation>
    <scope>NUCLEOTIDE SEQUENCE [LARGE SCALE MRNA] (ISOFORM 2)</scope>
    <source>
        <tissue>Brain</tissue>
    </source>
</reference>
<reference key="2">
    <citation type="journal article" date="1999" name="Nature">
        <title>The DNA sequence of human chromosome 22.</title>
        <authorList>
            <person name="Dunham I."/>
            <person name="Hunt A.R."/>
            <person name="Collins J.E."/>
            <person name="Bruskiewich R."/>
            <person name="Beare D.M."/>
            <person name="Clamp M."/>
            <person name="Smink L.J."/>
            <person name="Ainscough R."/>
            <person name="Almeida J.P."/>
            <person name="Babbage A.K."/>
            <person name="Bagguley C."/>
            <person name="Bailey J."/>
            <person name="Barlow K.F."/>
            <person name="Bates K.N."/>
            <person name="Beasley O.P."/>
            <person name="Bird C.P."/>
            <person name="Blakey S.E."/>
            <person name="Bridgeman A.M."/>
            <person name="Buck D."/>
            <person name="Burgess J."/>
            <person name="Burrill W.D."/>
            <person name="Burton J."/>
            <person name="Carder C."/>
            <person name="Carter N.P."/>
            <person name="Chen Y."/>
            <person name="Clark G."/>
            <person name="Clegg S.M."/>
            <person name="Cobley V.E."/>
            <person name="Cole C.G."/>
            <person name="Collier R.E."/>
            <person name="Connor R."/>
            <person name="Conroy D."/>
            <person name="Corby N.R."/>
            <person name="Coville G.J."/>
            <person name="Cox A.V."/>
            <person name="Davis J."/>
            <person name="Dawson E."/>
            <person name="Dhami P.D."/>
            <person name="Dockree C."/>
            <person name="Dodsworth S.J."/>
            <person name="Durbin R.M."/>
            <person name="Ellington A.G."/>
            <person name="Evans K.L."/>
            <person name="Fey J.M."/>
            <person name="Fleming K."/>
            <person name="French L."/>
            <person name="Garner A.A."/>
            <person name="Gilbert J.G.R."/>
            <person name="Goward M.E."/>
            <person name="Grafham D.V."/>
            <person name="Griffiths M.N.D."/>
            <person name="Hall C."/>
            <person name="Hall R.E."/>
            <person name="Hall-Tamlyn G."/>
            <person name="Heathcott R.W."/>
            <person name="Ho S."/>
            <person name="Holmes S."/>
            <person name="Hunt S.E."/>
            <person name="Jones M.C."/>
            <person name="Kershaw J."/>
            <person name="Kimberley A.M."/>
            <person name="King A."/>
            <person name="Laird G.K."/>
            <person name="Langford C.F."/>
            <person name="Leversha M.A."/>
            <person name="Lloyd C."/>
            <person name="Lloyd D.M."/>
            <person name="Martyn I.D."/>
            <person name="Mashreghi-Mohammadi M."/>
            <person name="Matthews L.H."/>
            <person name="Mccann O.T."/>
            <person name="Mcclay J."/>
            <person name="Mclaren S."/>
            <person name="McMurray A.A."/>
            <person name="Milne S.A."/>
            <person name="Mortimore B.J."/>
            <person name="Odell C.N."/>
            <person name="Pavitt R."/>
            <person name="Pearce A.V."/>
            <person name="Pearson D."/>
            <person name="Phillimore B.J.C.T."/>
            <person name="Phillips S.H."/>
            <person name="Plumb R.W."/>
            <person name="Ramsay H."/>
            <person name="Ramsey Y."/>
            <person name="Rogers L."/>
            <person name="Ross M.T."/>
            <person name="Scott C.E."/>
            <person name="Sehra H.K."/>
            <person name="Skuce C.D."/>
            <person name="Smalley S."/>
            <person name="Smith M.L."/>
            <person name="Soderlund C."/>
            <person name="Spragon L."/>
            <person name="Steward C.A."/>
            <person name="Sulston J.E."/>
            <person name="Swann R.M."/>
            <person name="Vaudin M."/>
            <person name="Wall M."/>
            <person name="Wallis J.M."/>
            <person name="Whiteley M.N."/>
            <person name="Willey D.L."/>
            <person name="Williams L."/>
            <person name="Williams S.A."/>
            <person name="Williamson H."/>
            <person name="Wilmer T.E."/>
            <person name="Wilming L."/>
            <person name="Wright C.L."/>
            <person name="Hubbard T."/>
            <person name="Bentley D.R."/>
            <person name="Beck S."/>
            <person name="Rogers J."/>
            <person name="Shimizu N."/>
            <person name="Minoshima S."/>
            <person name="Kawasaki K."/>
            <person name="Sasaki T."/>
            <person name="Asakawa S."/>
            <person name="Kudoh J."/>
            <person name="Shintani A."/>
            <person name="Shibuya K."/>
            <person name="Yoshizaki Y."/>
            <person name="Aoki N."/>
            <person name="Mitsuyama S."/>
            <person name="Roe B.A."/>
            <person name="Chen F."/>
            <person name="Chu L."/>
            <person name="Crabtree J."/>
            <person name="Deschamps S."/>
            <person name="Do A."/>
            <person name="Do T."/>
            <person name="Dorman A."/>
            <person name="Fang F."/>
            <person name="Fu Y."/>
            <person name="Hu P."/>
            <person name="Hua A."/>
            <person name="Kenton S."/>
            <person name="Lai H."/>
            <person name="Lao H.I."/>
            <person name="Lewis J."/>
            <person name="Lewis S."/>
            <person name="Lin S.-P."/>
            <person name="Loh P."/>
            <person name="Malaj E."/>
            <person name="Nguyen T."/>
            <person name="Pan H."/>
            <person name="Phan S."/>
            <person name="Qi S."/>
            <person name="Qian Y."/>
            <person name="Ray L."/>
            <person name="Ren Q."/>
            <person name="Shaull S."/>
            <person name="Sloan D."/>
            <person name="Song L."/>
            <person name="Wang Q."/>
            <person name="Wang Y."/>
            <person name="Wang Z."/>
            <person name="White J."/>
            <person name="Willingham D."/>
            <person name="Wu H."/>
            <person name="Yao Z."/>
            <person name="Zhan M."/>
            <person name="Zhang G."/>
            <person name="Chissoe S."/>
            <person name="Murray J."/>
            <person name="Miller N."/>
            <person name="Minx P."/>
            <person name="Fulton R."/>
            <person name="Johnson D."/>
            <person name="Bemis G."/>
            <person name="Bentley D."/>
            <person name="Bradshaw H."/>
            <person name="Bourne S."/>
            <person name="Cordes M."/>
            <person name="Du Z."/>
            <person name="Fulton L."/>
            <person name="Goela D."/>
            <person name="Graves T."/>
            <person name="Hawkins J."/>
            <person name="Hinds K."/>
            <person name="Kemp K."/>
            <person name="Latreille P."/>
            <person name="Layman D."/>
            <person name="Ozersky P."/>
            <person name="Rohlfing T."/>
            <person name="Scheet P."/>
            <person name="Walker C."/>
            <person name="Wamsley A."/>
            <person name="Wohldmann P."/>
            <person name="Pepin K."/>
            <person name="Nelson J."/>
            <person name="Korf I."/>
            <person name="Bedell J.A."/>
            <person name="Hillier L.W."/>
            <person name="Mardis E."/>
            <person name="Waterston R."/>
            <person name="Wilson R."/>
            <person name="Emanuel B.S."/>
            <person name="Shaikh T."/>
            <person name="Kurahashi H."/>
            <person name="Saitta S."/>
            <person name="Budarf M.L."/>
            <person name="McDermid H.E."/>
            <person name="Johnson A."/>
            <person name="Wong A.C.C."/>
            <person name="Morrow B.E."/>
            <person name="Edelmann L."/>
            <person name="Kim U.J."/>
            <person name="Shizuya H."/>
            <person name="Simon M.I."/>
            <person name="Dumanski J.P."/>
            <person name="Peyrard M."/>
            <person name="Kedra D."/>
            <person name="Seroussi E."/>
            <person name="Fransson I."/>
            <person name="Tapia I."/>
            <person name="Bruder C.E."/>
            <person name="O'Brien K.P."/>
            <person name="Wilkinson P."/>
            <person name="Bodenteich A."/>
            <person name="Hartman K."/>
            <person name="Hu X."/>
            <person name="Khan A.S."/>
            <person name="Lane L."/>
            <person name="Tilahun Y."/>
            <person name="Wright H."/>
        </authorList>
    </citation>
    <scope>NUCLEOTIDE SEQUENCE [LARGE SCALE GENOMIC DNA]</scope>
</reference>
<reference key="3">
    <citation type="submission" date="2005-07" db="EMBL/GenBank/DDBJ databases">
        <authorList>
            <person name="Mural R.J."/>
            <person name="Istrail S."/>
            <person name="Sutton G.G."/>
            <person name="Florea L."/>
            <person name="Halpern A.L."/>
            <person name="Mobarry C.M."/>
            <person name="Lippert R."/>
            <person name="Walenz B."/>
            <person name="Shatkay H."/>
            <person name="Dew I."/>
            <person name="Miller J.R."/>
            <person name="Flanigan M.J."/>
            <person name="Edwards N.J."/>
            <person name="Bolanos R."/>
            <person name="Fasulo D."/>
            <person name="Halldorsson B.V."/>
            <person name="Hannenhalli S."/>
            <person name="Turner R."/>
            <person name="Yooseph S."/>
            <person name="Lu F."/>
            <person name="Nusskern D.R."/>
            <person name="Shue B.C."/>
            <person name="Zheng X.H."/>
            <person name="Zhong F."/>
            <person name="Delcher A.L."/>
            <person name="Huson D.H."/>
            <person name="Kravitz S.A."/>
            <person name="Mouchard L."/>
            <person name="Reinert K."/>
            <person name="Remington K.A."/>
            <person name="Clark A.G."/>
            <person name="Waterman M.S."/>
            <person name="Eichler E.E."/>
            <person name="Adams M.D."/>
            <person name="Hunkapiller M.W."/>
            <person name="Myers E.W."/>
            <person name="Venter J.C."/>
        </authorList>
    </citation>
    <scope>NUCLEOTIDE SEQUENCE [LARGE SCALE GENOMIC DNA]</scope>
</reference>
<reference key="4">
    <citation type="journal article" date="2004" name="Genome Res.">
        <title>The status, quality, and expansion of the NIH full-length cDNA project: the Mammalian Gene Collection (MGC).</title>
        <authorList>
            <consortium name="The MGC Project Team"/>
        </authorList>
    </citation>
    <scope>NUCLEOTIDE SEQUENCE [LARGE SCALE MRNA]</scope>
</reference>
<reference key="5">
    <citation type="journal article" date="2004" name="Cancer Res.">
        <title>Autoantibodies to annexin XI-A and other autoantigens in the diagnosis of breast cancer.</title>
        <authorList>
            <person name="Fernandez-Madrid F."/>
            <person name="Tang N."/>
            <person name="Alansari H."/>
            <person name="Granda J.L."/>
            <person name="Tait L."/>
            <person name="Amirikia K.C."/>
            <person name="Moroianu M."/>
            <person name="Wang X."/>
            <person name="Karvonen R.L."/>
        </authorList>
    </citation>
    <scope>AUTOANTIBODIES</scope>
</reference>
<reference key="6">
    <citation type="journal article" date="2006" name="Cancer Res.">
        <authorList>
            <person name="Fernandez-Madrid F."/>
            <person name="Tang N."/>
            <person name="Alansari H."/>
            <person name="Granda J.L."/>
            <person name="Tait L."/>
            <person name="Amirikia K.C."/>
            <person name="Moroianu M."/>
            <person name="Wang X."/>
            <person name="Karvonen R.L."/>
        </authorList>
    </citation>
    <scope>ERRATUM OF PUBMED:15289310</scope>
</reference>
<reference key="7">
    <citation type="journal article" date="2008" name="Proc. Natl. Acad. Sci. U.S.A.">
        <title>A quantitative atlas of mitotic phosphorylation.</title>
        <authorList>
            <person name="Dephoure N."/>
            <person name="Zhou C."/>
            <person name="Villen J."/>
            <person name="Beausoleil S.A."/>
            <person name="Bakalarski C.E."/>
            <person name="Elledge S.J."/>
            <person name="Gygi S.P."/>
        </authorList>
    </citation>
    <scope>PHOSPHORYLATION [LARGE SCALE ANALYSIS] AT SER-79; SER-87; SER-88; SER-128; SER-384; SER-508; SER-749; THR-1059; SER-1063; SER-1224; SER-1366; SER-1441; SER-1488; SER-1757; SER-1760 AND SER-1786</scope>
    <scope>IDENTIFICATION BY MASS SPECTROMETRY [LARGE SCALE ANALYSIS]</scope>
    <source>
        <tissue>Cervix carcinoma</tissue>
    </source>
</reference>
<reference key="8">
    <citation type="journal article" date="2008" name="Proteomics">
        <title>Large-scale phosphoproteome analysis of human liver tissue by enrichment and fractionation of phosphopeptides with strong anion exchange chromatography.</title>
        <authorList>
            <person name="Han G."/>
            <person name="Ye M."/>
            <person name="Zhou H."/>
            <person name="Jiang X."/>
            <person name="Feng S."/>
            <person name="Jiang X."/>
            <person name="Tian R."/>
            <person name="Wan D."/>
            <person name="Zou H."/>
            <person name="Gu J."/>
        </authorList>
    </citation>
    <scope>PHOSPHORYLATION [LARGE SCALE ANALYSIS] AT SER-1701</scope>
    <scope>IDENTIFICATION BY MASS SPECTROMETRY [LARGE SCALE ANALYSIS]</scope>
    <source>
        <tissue>Liver</tissue>
    </source>
</reference>
<reference key="9">
    <citation type="journal article" date="2009" name="Anal. Chem.">
        <title>Lys-N and trypsin cover complementary parts of the phosphoproteome in a refined SCX-based approach.</title>
        <authorList>
            <person name="Gauci S."/>
            <person name="Helbig A.O."/>
            <person name="Slijper M."/>
            <person name="Krijgsveld J."/>
            <person name="Heck A.J."/>
            <person name="Mohammed S."/>
        </authorList>
    </citation>
    <scope>IDENTIFICATION BY MASS SPECTROMETRY [LARGE SCALE ANALYSIS]</scope>
</reference>
<reference key="10">
    <citation type="journal article" date="2010" name="Sci. Signal.">
        <title>Quantitative phosphoproteomics reveals widespread full phosphorylation site occupancy during mitosis.</title>
        <authorList>
            <person name="Olsen J.V."/>
            <person name="Vermeulen M."/>
            <person name="Santamaria A."/>
            <person name="Kumar C."/>
            <person name="Miller M.L."/>
            <person name="Jensen L.J."/>
            <person name="Gnad F."/>
            <person name="Cox J."/>
            <person name="Jensen T.S."/>
            <person name="Nigg E.A."/>
            <person name="Brunak S."/>
            <person name="Mann M."/>
        </authorList>
    </citation>
    <scope>PHOSPHORYLATION [LARGE SCALE ANALYSIS] AT SER-92; THR-378; SER-384; SER-458; SER-508; SER-749; SER-969; THR-1059; SER-1154; THR-1163; SER-1441; SER-1488; SER-1701 AND SER-1786</scope>
    <scope>IDENTIFICATION BY MASS SPECTROMETRY [LARGE SCALE ANALYSIS]</scope>
    <source>
        <tissue>Cervix carcinoma</tissue>
    </source>
</reference>
<reference key="11">
    <citation type="journal article" date="2013" name="J. Proteome Res.">
        <title>Toward a comprehensive characterization of a human cancer cell phosphoproteome.</title>
        <authorList>
            <person name="Zhou H."/>
            <person name="Di Palma S."/>
            <person name="Preisinger C."/>
            <person name="Peng M."/>
            <person name="Polat A.N."/>
            <person name="Heck A.J."/>
            <person name="Mohammed S."/>
        </authorList>
    </citation>
    <scope>PHOSPHORYLATION [LARGE SCALE ANALYSIS] AT SER-52; SER-56; SER-128; SER-284; SER-366; SER-404; SER-508; SER-749; SER-981; THR-1179; THR-1185; SER-1224; THR-1226; SER-1441; SER-1488; SER-1506; SER-1757 AND SER-1760</scope>
    <scope>IDENTIFICATION BY MASS SPECTROMETRY [LARGE SCALE ANALYSIS]</scope>
    <source>
        <tissue>Cervix carcinoma</tissue>
    </source>
</reference>
<reference key="12">
    <citation type="journal article" date="2014" name="J. Proteomics">
        <title>An enzyme assisted RP-RPLC approach for in-depth analysis of human liver phosphoproteome.</title>
        <authorList>
            <person name="Bian Y."/>
            <person name="Song C."/>
            <person name="Cheng K."/>
            <person name="Dong M."/>
            <person name="Wang F."/>
            <person name="Huang J."/>
            <person name="Sun D."/>
            <person name="Wang L."/>
            <person name="Ye M."/>
            <person name="Zou H."/>
        </authorList>
    </citation>
    <scope>PHOSPHORYLATION [LARGE SCALE ANALYSIS] AT SER-244; THR-600; SER-1555 AND SER-1662</scope>
    <scope>IDENTIFICATION BY MASS SPECTROMETRY [LARGE SCALE ANALYSIS]</scope>
    <source>
        <tissue>Liver</tissue>
    </source>
</reference>
<keyword id="KW-0025">Alternative splicing</keyword>
<keyword id="KW-0597">Phosphoprotein</keyword>
<keyword id="KW-1267">Proteomics identification</keyword>
<keyword id="KW-1185">Reference proteome</keyword>
<gene>
    <name type="primary">KIAA1671</name>
</gene>
<dbReference type="EMBL" id="AB051458">
    <property type="protein sequence ID" value="BAB33341.1"/>
    <property type="status" value="ALT_INIT"/>
    <property type="molecule type" value="mRNA"/>
</dbReference>
<dbReference type="EMBL" id="AL022323">
    <property type="status" value="NOT_ANNOTATED_CDS"/>
    <property type="molecule type" value="Genomic_DNA"/>
</dbReference>
<dbReference type="EMBL" id="Z99916">
    <property type="status" value="NOT_ANNOTATED_CDS"/>
    <property type="molecule type" value="Genomic_DNA"/>
</dbReference>
<dbReference type="EMBL" id="CH471095">
    <property type="protein sequence ID" value="EAW59684.1"/>
    <property type="molecule type" value="Genomic_DNA"/>
</dbReference>
<dbReference type="EMBL" id="BC171801">
    <property type="protein sequence ID" value="AAI71801.1"/>
    <property type="molecule type" value="mRNA"/>
</dbReference>
<dbReference type="CCDS" id="CCDS46676.1">
    <molecule id="Q9BY89-1"/>
</dbReference>
<dbReference type="CCDS" id="CCDS93135.1">
    <molecule id="Q9BY89-2"/>
</dbReference>
<dbReference type="RefSeq" id="NP_001138678.1">
    <molecule id="Q9BY89-1"/>
    <property type="nucleotide sequence ID" value="NM_001145206.2"/>
</dbReference>
<dbReference type="RefSeq" id="NP_001373861.1">
    <molecule id="Q9BY89-1"/>
    <property type="nucleotide sequence ID" value="NM_001386932.1"/>
</dbReference>
<dbReference type="RefSeq" id="NP_001373862.1">
    <molecule id="Q9BY89-1"/>
    <property type="nucleotide sequence ID" value="NM_001386933.1"/>
</dbReference>
<dbReference type="RefSeq" id="NP_001373864.1">
    <molecule id="Q9BY89-2"/>
    <property type="nucleotide sequence ID" value="NM_001386935.1"/>
</dbReference>
<dbReference type="RefSeq" id="XP_005261850.1">
    <property type="nucleotide sequence ID" value="XM_005261793.2"/>
</dbReference>
<dbReference type="RefSeq" id="XP_005261851.1">
    <property type="nucleotide sequence ID" value="XM_005261794.4"/>
</dbReference>
<dbReference type="RefSeq" id="XP_006724409.1">
    <molecule id="Q9BY89-1"/>
    <property type="nucleotide sequence ID" value="XM_006724346.3"/>
</dbReference>
<dbReference type="RefSeq" id="XP_047297512.1">
    <molecule id="Q9BY89-1"/>
    <property type="nucleotide sequence ID" value="XM_047441556.1"/>
</dbReference>
<dbReference type="RefSeq" id="XP_054182042.1">
    <molecule id="Q9BY89-1"/>
    <property type="nucleotide sequence ID" value="XM_054326067.1"/>
</dbReference>
<dbReference type="RefSeq" id="XP_054182043.1">
    <molecule id="Q9BY89-1"/>
    <property type="nucleotide sequence ID" value="XM_054326068.1"/>
</dbReference>
<dbReference type="SMR" id="Q9BY89"/>
<dbReference type="BioGRID" id="124506">
    <property type="interactions" value="213"/>
</dbReference>
<dbReference type="FunCoup" id="Q9BY89">
    <property type="interactions" value="1114"/>
</dbReference>
<dbReference type="IntAct" id="Q9BY89">
    <property type="interactions" value="90"/>
</dbReference>
<dbReference type="MINT" id="Q9BY89"/>
<dbReference type="STRING" id="9606.ENSP00000351207"/>
<dbReference type="GlyGen" id="Q9BY89">
    <property type="glycosylation" value="7 sites, 1 O-linked glycan (2 sites)"/>
</dbReference>
<dbReference type="iPTMnet" id="Q9BY89"/>
<dbReference type="PhosphoSitePlus" id="Q9BY89"/>
<dbReference type="SwissPalm" id="Q9BY89"/>
<dbReference type="BioMuta" id="KIAA1671"/>
<dbReference type="DMDM" id="147647261"/>
<dbReference type="jPOST" id="Q9BY89"/>
<dbReference type="MassIVE" id="Q9BY89"/>
<dbReference type="PaxDb" id="9606-ENSP00000351207"/>
<dbReference type="PeptideAtlas" id="Q9BY89"/>
<dbReference type="ProteomicsDB" id="79603">
    <molecule id="Q9BY89-1"/>
</dbReference>
<dbReference type="ProteomicsDB" id="79604">
    <molecule id="Q9BY89-2"/>
</dbReference>
<dbReference type="Pumba" id="Q9BY89"/>
<dbReference type="Antibodypedia" id="5419">
    <property type="antibodies" value="10 antibodies from 8 providers"/>
</dbReference>
<dbReference type="DNASU" id="85379"/>
<dbReference type="Ensembl" id="ENST00000358431.8">
    <molecule id="Q9BY89-1"/>
    <property type="protein sequence ID" value="ENSP00000351207.3"/>
    <property type="gene ID" value="ENSG00000197077.14"/>
</dbReference>
<dbReference type="Ensembl" id="ENST00000401395.1">
    <molecule id="Q9BY89-2"/>
    <property type="protein sequence ID" value="ENSP00000385377.1"/>
    <property type="gene ID" value="ENSG00000197077.14"/>
</dbReference>
<dbReference type="Ensembl" id="ENST00000406486.8">
    <molecule id="Q9BY89-1"/>
    <property type="protein sequence ID" value="ENSP00000385152.3"/>
    <property type="gene ID" value="ENSG00000197077.14"/>
</dbReference>
<dbReference type="GeneID" id="85379"/>
<dbReference type="KEGG" id="hsa:85379"/>
<dbReference type="MANE-Select" id="ENST00000358431.8">
    <property type="protein sequence ID" value="ENSP00000351207.3"/>
    <property type="RefSeq nucleotide sequence ID" value="NM_001145206.2"/>
    <property type="RefSeq protein sequence ID" value="NP_001138678.1"/>
</dbReference>
<dbReference type="UCSC" id="uc003abl.4">
    <molecule id="Q9BY89-1"/>
    <property type="organism name" value="human"/>
</dbReference>
<dbReference type="AGR" id="HGNC:29345"/>
<dbReference type="CTD" id="85379"/>
<dbReference type="DisGeNET" id="85379"/>
<dbReference type="GeneCards" id="KIAA1671"/>
<dbReference type="HGNC" id="HGNC:29345">
    <property type="gene designation" value="KIAA1671"/>
</dbReference>
<dbReference type="HPA" id="ENSG00000197077">
    <property type="expression patterns" value="Low tissue specificity"/>
</dbReference>
<dbReference type="neXtProt" id="NX_Q9BY89"/>
<dbReference type="OpenTargets" id="ENSG00000197077"/>
<dbReference type="PharmGKB" id="PA165378342"/>
<dbReference type="VEuPathDB" id="HostDB:ENSG00000197077"/>
<dbReference type="eggNOG" id="ENOG502QWAQ">
    <property type="taxonomic scope" value="Eukaryota"/>
</dbReference>
<dbReference type="GeneTree" id="ENSGT00940000154184"/>
<dbReference type="HOGENOM" id="CLU_002443_0_0_1"/>
<dbReference type="InParanoid" id="Q9BY89"/>
<dbReference type="OMA" id="ADQSGHC"/>
<dbReference type="OrthoDB" id="9950932at2759"/>
<dbReference type="PAN-GO" id="Q9BY89">
    <property type="GO annotations" value="0 GO annotations based on evolutionary models"/>
</dbReference>
<dbReference type="PhylomeDB" id="Q9BY89"/>
<dbReference type="TreeFam" id="TF336029"/>
<dbReference type="PathwayCommons" id="Q9BY89"/>
<dbReference type="SignaLink" id="Q9BY89"/>
<dbReference type="BioGRID-ORCS" id="85379">
    <property type="hits" value="16 hits in 1141 CRISPR screens"/>
</dbReference>
<dbReference type="ChiTaRS" id="KIAA1671">
    <property type="organism name" value="human"/>
</dbReference>
<dbReference type="GenomeRNAi" id="85379"/>
<dbReference type="Pharos" id="Q9BY89">
    <property type="development level" value="Tdark"/>
</dbReference>
<dbReference type="PRO" id="PR:Q9BY89"/>
<dbReference type="Proteomes" id="UP000005640">
    <property type="component" value="Chromosome 22"/>
</dbReference>
<dbReference type="RNAct" id="Q9BY89">
    <property type="molecule type" value="protein"/>
</dbReference>
<dbReference type="Bgee" id="ENSG00000197077">
    <property type="expression patterns" value="Expressed in upper arm skin and 190 other cell types or tissues"/>
</dbReference>
<dbReference type="ExpressionAtlas" id="Q9BY89">
    <property type="expression patterns" value="baseline and differential"/>
</dbReference>
<dbReference type="GO" id="GO:0005929">
    <property type="term" value="C:cilium"/>
    <property type="evidence" value="ECO:0000314"/>
    <property type="project" value="HPA"/>
</dbReference>
<dbReference type="GO" id="GO:0045171">
    <property type="term" value="C:intercellular bridge"/>
    <property type="evidence" value="ECO:0000314"/>
    <property type="project" value="HPA"/>
</dbReference>
<dbReference type="GO" id="GO:0015630">
    <property type="term" value="C:microtubule cytoskeleton"/>
    <property type="evidence" value="ECO:0000314"/>
    <property type="project" value="HPA"/>
</dbReference>
<dbReference type="InterPro" id="IPR032764">
    <property type="entry name" value="Tankyrase-bd_C"/>
</dbReference>
<dbReference type="InterPro" id="IPR040006">
    <property type="entry name" value="TNKS1BP1-like"/>
</dbReference>
<dbReference type="PANTHER" id="PTHR22042:SF3">
    <property type="entry name" value="RIKEN CDNA 2900026A02 GENE"/>
    <property type="match status" value="1"/>
</dbReference>
<dbReference type="PANTHER" id="PTHR22042">
    <property type="entry name" value="TANKYRASE 1 BINDING PROTEIN"/>
    <property type="match status" value="1"/>
</dbReference>
<dbReference type="Pfam" id="PF15327">
    <property type="entry name" value="Tankyrase_bdg_C"/>
    <property type="match status" value="1"/>
</dbReference>
<dbReference type="SMART" id="SM01319">
    <property type="entry name" value="Tankyrase_bdg_C"/>
    <property type="match status" value="1"/>
</dbReference>
<evidence type="ECO:0000256" key="1">
    <source>
        <dbReference type="SAM" id="MobiDB-lite"/>
    </source>
</evidence>
<evidence type="ECO:0000303" key="2">
    <source>
    </source>
</evidence>
<evidence type="ECO:0000305" key="3"/>
<evidence type="ECO:0007744" key="4">
    <source>
    </source>
</evidence>
<evidence type="ECO:0007744" key="5">
    <source>
    </source>
</evidence>
<evidence type="ECO:0007744" key="6">
    <source>
    </source>
</evidence>
<evidence type="ECO:0007744" key="7">
    <source>
    </source>
</evidence>
<evidence type="ECO:0007744" key="8">
    <source>
    </source>
</evidence>